<feature type="chain" id="PRO_0000210104" description="mRNA-capping enzyme subunit alpha">
    <location>
        <begin position="1"/>
        <end position="402"/>
    </location>
</feature>
<feature type="region of interest" description="Disordered" evidence="3">
    <location>
        <begin position="374"/>
        <end position="402"/>
    </location>
</feature>
<feature type="active site" description="N6-GMP-lysine intermediate" evidence="1">
    <location>
        <position position="67"/>
    </location>
</feature>
<feature type="mutagenesis site" description="Loss of function.">
    <original>K</original>
    <variation>A</variation>
    <location>
        <position position="67"/>
    </location>
</feature>
<feature type="helix" evidence="6">
    <location>
        <begin position="5"/>
        <end position="7"/>
    </location>
</feature>
<feature type="strand" evidence="6">
    <location>
        <begin position="14"/>
        <end position="17"/>
    </location>
</feature>
<feature type="helix" evidence="6">
    <location>
        <begin position="20"/>
        <end position="34"/>
    </location>
</feature>
<feature type="strand" evidence="7">
    <location>
        <begin position="38"/>
        <end position="40"/>
    </location>
</feature>
<feature type="strand" evidence="6">
    <location>
        <begin position="43"/>
        <end position="48"/>
    </location>
</feature>
<feature type="helix" evidence="6">
    <location>
        <begin position="53"/>
        <end position="59"/>
    </location>
</feature>
<feature type="strand" evidence="6">
    <location>
        <begin position="62"/>
        <end position="65"/>
    </location>
</feature>
<feature type="strand" evidence="6">
    <location>
        <begin position="70"/>
        <end position="79"/>
    </location>
</feature>
<feature type="strand" evidence="7">
    <location>
        <begin position="81"/>
        <end position="85"/>
    </location>
</feature>
<feature type="strand" evidence="6">
    <location>
        <begin position="86"/>
        <end position="92"/>
    </location>
</feature>
<feature type="strand" evidence="6">
    <location>
        <begin position="98"/>
        <end position="101"/>
    </location>
</feature>
<feature type="strand" evidence="6">
    <location>
        <begin position="112"/>
        <end position="114"/>
    </location>
</feature>
<feature type="strand" evidence="6">
    <location>
        <begin position="120"/>
        <end position="131"/>
    </location>
</feature>
<feature type="helix" evidence="6">
    <location>
        <begin position="133"/>
        <end position="135"/>
    </location>
</feature>
<feature type="strand" evidence="6">
    <location>
        <begin position="137"/>
        <end position="149"/>
    </location>
</feature>
<feature type="helix" evidence="7">
    <location>
        <begin position="154"/>
        <end position="156"/>
    </location>
</feature>
<feature type="helix" evidence="6">
    <location>
        <begin position="159"/>
        <end position="169"/>
    </location>
</feature>
<feature type="helix" evidence="6">
    <location>
        <begin position="171"/>
        <end position="179"/>
    </location>
</feature>
<feature type="helix" evidence="6">
    <location>
        <begin position="182"/>
        <end position="185"/>
    </location>
</feature>
<feature type="strand" evidence="6">
    <location>
        <begin position="189"/>
        <end position="194"/>
    </location>
</feature>
<feature type="strand" evidence="5">
    <location>
        <begin position="197"/>
        <end position="199"/>
    </location>
</feature>
<feature type="helix" evidence="6">
    <location>
        <begin position="203"/>
        <end position="208"/>
    </location>
</feature>
<feature type="helix" evidence="6">
    <location>
        <begin position="211"/>
        <end position="213"/>
    </location>
</feature>
<feature type="strand" evidence="6">
    <location>
        <begin position="221"/>
        <end position="228"/>
    </location>
</feature>
<feature type="strand" evidence="6">
    <location>
        <begin position="232"/>
        <end position="241"/>
    </location>
</feature>
<feature type="helix" evidence="6">
    <location>
        <begin position="244"/>
        <end position="246"/>
    </location>
</feature>
<feature type="strand" evidence="6">
    <location>
        <begin position="249"/>
        <end position="256"/>
    </location>
</feature>
<feature type="strand" evidence="6">
    <location>
        <begin position="261"/>
        <end position="263"/>
    </location>
</feature>
<feature type="strand" evidence="6">
    <location>
        <begin position="272"/>
        <end position="280"/>
    </location>
</feature>
<feature type="strand" evidence="6">
    <location>
        <begin position="283"/>
        <end position="290"/>
    </location>
</feature>
<feature type="helix" evidence="6">
    <location>
        <begin position="294"/>
        <end position="303"/>
    </location>
</feature>
<feature type="strand" evidence="6">
    <location>
        <begin position="308"/>
        <end position="316"/>
    </location>
</feature>
<feature type="strand" evidence="6">
    <location>
        <begin position="322"/>
        <end position="327"/>
    </location>
</feature>
<feature type="helix" evidence="6">
    <location>
        <begin position="337"/>
        <end position="348"/>
    </location>
</feature>
<feature type="helix" evidence="6">
    <location>
        <begin position="353"/>
        <end position="358"/>
    </location>
</feature>
<feature type="helix" evidence="6">
    <location>
        <begin position="360"/>
        <end position="370"/>
    </location>
</feature>
<accession>P40997</accession>
<proteinExistence type="evidence at protein level"/>
<protein>
    <recommendedName>
        <fullName>mRNA-capping enzyme subunit alpha</fullName>
    </recommendedName>
    <alternativeName>
        <fullName>GTP--RNA guanylyltransferase</fullName>
        <shortName>GTase</shortName>
    </alternativeName>
    <alternativeName>
        <fullName>mRNA guanylyltransferase</fullName>
        <ecNumber evidence="2">2.7.7.50</ecNumber>
    </alternativeName>
</protein>
<keyword id="KW-0002">3D-structure</keyword>
<keyword id="KW-0342">GTP-binding</keyword>
<keyword id="KW-0506">mRNA capping</keyword>
<keyword id="KW-0507">mRNA processing</keyword>
<keyword id="KW-0547">Nucleotide-binding</keyword>
<keyword id="KW-0548">Nucleotidyltransferase</keyword>
<keyword id="KW-0539">Nucleus</keyword>
<keyword id="KW-1185">Reference proteome</keyword>
<keyword id="KW-0808">Transferase</keyword>
<comment type="function">
    <text evidence="2">Second step of mRNA capping. Transfer of the GMP moiety of GTP to the 5'-end of RNA via an enzyme-GMP covalent reaction intermediate.</text>
</comment>
<comment type="catalytic activity">
    <reaction evidence="2">
        <text>a 5'-end diphospho-ribonucleoside in mRNA + GTP + H(+) = a 5'-end (5'-triphosphoguanosine)-ribonucleoside in mRNA + diphosphate</text>
        <dbReference type="Rhea" id="RHEA:67012"/>
        <dbReference type="Rhea" id="RHEA-COMP:17165"/>
        <dbReference type="Rhea" id="RHEA-COMP:17166"/>
        <dbReference type="ChEBI" id="CHEBI:15378"/>
        <dbReference type="ChEBI" id="CHEBI:33019"/>
        <dbReference type="ChEBI" id="CHEBI:37565"/>
        <dbReference type="ChEBI" id="CHEBI:167616"/>
        <dbReference type="ChEBI" id="CHEBI:167617"/>
        <dbReference type="EC" id="2.7.7.50"/>
    </reaction>
    <physiologicalReaction direction="left-to-right" evidence="2">
        <dbReference type="Rhea" id="RHEA:67013"/>
    </physiologicalReaction>
</comment>
<comment type="subunit">
    <text evidence="2">Heterodimer. The mRNA-capping enzyme is composed of two separate chains alpha and beta, respectively a mRNA guanylyltransferase and an mRNA 5'-triphosphate monophosphatase.</text>
</comment>
<comment type="subcellular location">
    <subcellularLocation>
        <location>Nucleus</location>
    </subcellularLocation>
</comment>
<comment type="similarity">
    <text evidence="4">Belongs to the eukaryotic GTase family.</text>
</comment>
<organism>
    <name type="scientific">Schizosaccharomyces pombe (strain 972 / ATCC 24843)</name>
    <name type="common">Fission yeast</name>
    <dbReference type="NCBI Taxonomy" id="284812"/>
    <lineage>
        <taxon>Eukaryota</taxon>
        <taxon>Fungi</taxon>
        <taxon>Dikarya</taxon>
        <taxon>Ascomycota</taxon>
        <taxon>Taphrinomycotina</taxon>
        <taxon>Schizosaccharomycetes</taxon>
        <taxon>Schizosaccharomycetales</taxon>
        <taxon>Schizosaccharomycetaceae</taxon>
        <taxon>Schizosaccharomyces</taxon>
    </lineage>
</organism>
<sequence length="402" mass="46875">MAPSEKDIEEVSVPGVLAPRDDVRVLKTRIAKLLGTSPDTFPGSQPVSFSKKHLQALKEKNYFVCEKSDGIRCLLYMTEHPRYENRPSVYLFDRKMNFYHVEKIFYPVENDKSGKKYHVDTLLDGELVLDIYPGGKKQLRYLVFDCLACDGIVYMSRLLDKRLGIFAKSIQKPLDEYTKTHMRETAIFPFLTSLKKMELGHGILKLFNEVIPRLRHGNDGLIFTCTETPYVSGTDQSLLKWKPKEMNTIDFMLKLEFAQPEEGDIDYSAMPEFQLGVWEGRNMYSFFAFMYVDEKEWEKLKSFNVPLSERIVECYLDDENRWRFLRFRDDKRDANHISTVKSVLQSIEDGVSKEDLLKEMPIIREAYYNRKKPSVTKRKLDETSNDDAPAIKKVAKESEKEI</sequence>
<name>MCE1_SCHPO</name>
<evidence type="ECO:0000250" key="1"/>
<evidence type="ECO:0000250" key="2">
    <source>
        <dbReference type="UniProtKB" id="Q01159"/>
    </source>
</evidence>
<evidence type="ECO:0000256" key="3">
    <source>
        <dbReference type="SAM" id="MobiDB-lite"/>
    </source>
</evidence>
<evidence type="ECO:0000305" key="4"/>
<evidence type="ECO:0007829" key="5">
    <source>
        <dbReference type="PDB" id="4PZ6"/>
    </source>
</evidence>
<evidence type="ECO:0007829" key="6">
    <source>
        <dbReference type="PDB" id="4PZ7"/>
    </source>
</evidence>
<evidence type="ECO:0007829" key="7">
    <source>
        <dbReference type="PDB" id="4PZ8"/>
    </source>
</evidence>
<gene>
    <name type="primary">ceg1</name>
    <name type="synonym">pce1</name>
    <name type="ORF">SPBC2F12.08c</name>
</gene>
<dbReference type="EC" id="2.7.7.50" evidence="2"/>
<dbReference type="EMBL" id="U16143">
    <property type="protein sequence ID" value="AAA64996.1"/>
    <property type="molecule type" value="Genomic_DNA"/>
</dbReference>
<dbReference type="EMBL" id="U18811">
    <property type="protein sequence ID" value="AAA58715.1"/>
    <property type="molecule type" value="Genomic_DNA"/>
</dbReference>
<dbReference type="EMBL" id="CU329671">
    <property type="protein sequence ID" value="CAB10156.1"/>
    <property type="molecule type" value="Genomic_DNA"/>
</dbReference>
<dbReference type="PIR" id="T40133">
    <property type="entry name" value="T40133"/>
</dbReference>
<dbReference type="RefSeq" id="NP_595708.1">
    <property type="nucleotide sequence ID" value="NM_001021605.2"/>
</dbReference>
<dbReference type="PDB" id="4PZ6">
    <property type="method" value="X-ray"/>
    <property type="resolution" value="2.41 A"/>
    <property type="chains" value="A/B=1-402"/>
</dbReference>
<dbReference type="PDB" id="4PZ7">
    <property type="method" value="X-ray"/>
    <property type="resolution" value="2.11 A"/>
    <property type="chains" value="A/B=1-402"/>
</dbReference>
<dbReference type="PDB" id="4PZ8">
    <property type="method" value="X-ray"/>
    <property type="resolution" value="3.10 A"/>
    <property type="chains" value="A=1-402"/>
</dbReference>
<dbReference type="PDBsum" id="4PZ6"/>
<dbReference type="PDBsum" id="4PZ7"/>
<dbReference type="PDBsum" id="4PZ8"/>
<dbReference type="SMR" id="P40997"/>
<dbReference type="BioGRID" id="276891">
    <property type="interactions" value="2"/>
</dbReference>
<dbReference type="FunCoup" id="P40997">
    <property type="interactions" value="535"/>
</dbReference>
<dbReference type="STRING" id="284812.P40997"/>
<dbReference type="iPTMnet" id="P40997"/>
<dbReference type="PaxDb" id="4896-SPBC2F12.08c.1"/>
<dbReference type="EnsemblFungi" id="SPBC2F12.08c.1">
    <property type="protein sequence ID" value="SPBC2F12.08c.1:pep"/>
    <property type="gene ID" value="SPBC2F12.08c"/>
</dbReference>
<dbReference type="GeneID" id="2540362"/>
<dbReference type="KEGG" id="spo:2540362"/>
<dbReference type="PomBase" id="SPBC2F12.08c">
    <property type="gene designation" value="ceg1"/>
</dbReference>
<dbReference type="VEuPathDB" id="FungiDB:SPBC2F12.08c"/>
<dbReference type="eggNOG" id="KOG2386">
    <property type="taxonomic scope" value="Eukaryota"/>
</dbReference>
<dbReference type="HOGENOM" id="CLU_021710_0_2_1"/>
<dbReference type="InParanoid" id="P40997"/>
<dbReference type="OMA" id="KDYYVCE"/>
<dbReference type="PhylomeDB" id="P40997"/>
<dbReference type="BRENDA" id="2.7.7.50">
    <property type="organism ID" value="5613"/>
</dbReference>
<dbReference type="Reactome" id="R-SPO-72086">
    <property type="pathway name" value="mRNA Capping"/>
</dbReference>
<dbReference type="Reactome" id="R-SPO-77075">
    <property type="pathway name" value="RNA Pol II CTD phosphorylation and interaction with CE"/>
</dbReference>
<dbReference type="EvolutionaryTrace" id="P40997"/>
<dbReference type="PRO" id="PR:P40997"/>
<dbReference type="Proteomes" id="UP000002485">
    <property type="component" value="Chromosome II"/>
</dbReference>
<dbReference type="GO" id="GO:0005634">
    <property type="term" value="C:nucleus"/>
    <property type="evidence" value="ECO:0007005"/>
    <property type="project" value="PomBase"/>
</dbReference>
<dbReference type="GO" id="GO:0005524">
    <property type="term" value="F:ATP binding"/>
    <property type="evidence" value="ECO:0007669"/>
    <property type="project" value="InterPro"/>
</dbReference>
<dbReference type="GO" id="GO:0005525">
    <property type="term" value="F:GTP binding"/>
    <property type="evidence" value="ECO:0007669"/>
    <property type="project" value="UniProtKB-KW"/>
</dbReference>
<dbReference type="GO" id="GO:0004484">
    <property type="term" value="F:mRNA guanylyltransferase activity"/>
    <property type="evidence" value="ECO:0000314"/>
    <property type="project" value="PomBase"/>
</dbReference>
<dbReference type="GO" id="GO:0099122">
    <property type="term" value="F:RNA polymerase II C-terminal domain binding"/>
    <property type="evidence" value="ECO:0000353"/>
    <property type="project" value="PomBase"/>
</dbReference>
<dbReference type="GO" id="GO:0006370">
    <property type="term" value="P:7-methylguanosine mRNA capping"/>
    <property type="evidence" value="ECO:0000314"/>
    <property type="project" value="PomBase"/>
</dbReference>
<dbReference type="CDD" id="cd07895">
    <property type="entry name" value="Adenylation_mRNA_capping"/>
    <property type="match status" value="1"/>
</dbReference>
<dbReference type="FunFam" id="2.40.50.140:FF:000275">
    <property type="entry name" value="mRNA-capping enzyme subunit alpha"/>
    <property type="match status" value="1"/>
</dbReference>
<dbReference type="FunFam" id="3.30.470.30:FF:000011">
    <property type="entry name" value="mRNA-capping enzyme subunit alpha"/>
    <property type="match status" value="1"/>
</dbReference>
<dbReference type="Gene3D" id="3.30.470.30">
    <property type="entry name" value="DNA ligase/mRNA capping enzyme"/>
    <property type="match status" value="1"/>
</dbReference>
<dbReference type="Gene3D" id="2.40.50.140">
    <property type="entry name" value="Nucleic acid-binding proteins"/>
    <property type="match status" value="1"/>
</dbReference>
<dbReference type="IDEAL" id="IID50316"/>
<dbReference type="InterPro" id="IPR001339">
    <property type="entry name" value="mRNA_cap_enzyme_adenylation"/>
</dbReference>
<dbReference type="InterPro" id="IPR017075">
    <property type="entry name" value="mRNA_cap_enzyme_alpha"/>
</dbReference>
<dbReference type="InterPro" id="IPR013846">
    <property type="entry name" value="mRNA_cap_enzyme_C"/>
</dbReference>
<dbReference type="InterPro" id="IPR051029">
    <property type="entry name" value="mRNA_Capping_Enz/RNA_Phosphat"/>
</dbReference>
<dbReference type="InterPro" id="IPR012340">
    <property type="entry name" value="NA-bd_OB-fold"/>
</dbReference>
<dbReference type="PANTHER" id="PTHR10367">
    <property type="entry name" value="MRNA-CAPPING ENZYME"/>
    <property type="match status" value="1"/>
</dbReference>
<dbReference type="PANTHER" id="PTHR10367:SF17">
    <property type="entry name" value="MRNA-CAPPING ENZYME"/>
    <property type="match status" value="1"/>
</dbReference>
<dbReference type="Pfam" id="PF03919">
    <property type="entry name" value="mRNA_cap_C"/>
    <property type="match status" value="1"/>
</dbReference>
<dbReference type="Pfam" id="PF01331">
    <property type="entry name" value="mRNA_cap_enzyme"/>
    <property type="match status" value="1"/>
</dbReference>
<dbReference type="PIRSF" id="PIRSF036959">
    <property type="entry name" value="mRNA_cap_alpha"/>
    <property type="match status" value="1"/>
</dbReference>
<dbReference type="SUPFAM" id="SSF56091">
    <property type="entry name" value="DNA ligase/mRNA capping enzyme, catalytic domain"/>
    <property type="match status" value="1"/>
</dbReference>
<dbReference type="SUPFAM" id="SSF50249">
    <property type="entry name" value="Nucleic acid-binding proteins"/>
    <property type="match status" value="1"/>
</dbReference>
<reference key="1">
    <citation type="journal article" date="1994" name="Proc. Natl. Acad. Sci. U.S.A.">
        <title>Covalent catalysis in nucleotidyl transfer reactions: essential motifs in Saccharomyces cerevisiae RNA capping enzyme are conserved in Schizosaccharomyces pombe and viral capping enzymes and among polynucleotide ligases.</title>
        <authorList>
            <person name="Shuman S."/>
            <person name="Liu Y."/>
            <person name="Schwer B."/>
        </authorList>
    </citation>
    <scope>NUCLEOTIDE SEQUENCE [GENOMIC DNA]</scope>
</reference>
<reference key="2">
    <citation type="submission" date="1994-12" db="EMBL/GenBank/DDBJ databases">
        <authorList>
            <person name="Fresco L.D."/>
            <person name="Woo S."/>
            <person name="Buratowski S."/>
        </authorList>
    </citation>
    <scope>NUCLEOTIDE SEQUENCE [GENOMIC DNA]</scope>
</reference>
<reference key="3">
    <citation type="journal article" date="2002" name="Nature">
        <title>The genome sequence of Schizosaccharomyces pombe.</title>
        <authorList>
            <person name="Wood V."/>
            <person name="Gwilliam R."/>
            <person name="Rajandream M.A."/>
            <person name="Lyne M.H."/>
            <person name="Lyne R."/>
            <person name="Stewart A."/>
            <person name="Sgouros J.G."/>
            <person name="Peat N."/>
            <person name="Hayles J."/>
            <person name="Baker S.G."/>
            <person name="Basham D."/>
            <person name="Bowman S."/>
            <person name="Brooks K."/>
            <person name="Brown D."/>
            <person name="Brown S."/>
            <person name="Chillingworth T."/>
            <person name="Churcher C.M."/>
            <person name="Collins M."/>
            <person name="Connor R."/>
            <person name="Cronin A."/>
            <person name="Davis P."/>
            <person name="Feltwell T."/>
            <person name="Fraser A."/>
            <person name="Gentles S."/>
            <person name="Goble A."/>
            <person name="Hamlin N."/>
            <person name="Harris D.E."/>
            <person name="Hidalgo J."/>
            <person name="Hodgson G."/>
            <person name="Holroyd S."/>
            <person name="Hornsby T."/>
            <person name="Howarth S."/>
            <person name="Huckle E.J."/>
            <person name="Hunt S."/>
            <person name="Jagels K."/>
            <person name="James K.D."/>
            <person name="Jones L."/>
            <person name="Jones M."/>
            <person name="Leather S."/>
            <person name="McDonald S."/>
            <person name="McLean J."/>
            <person name="Mooney P."/>
            <person name="Moule S."/>
            <person name="Mungall K.L."/>
            <person name="Murphy L.D."/>
            <person name="Niblett D."/>
            <person name="Odell C."/>
            <person name="Oliver K."/>
            <person name="O'Neil S."/>
            <person name="Pearson D."/>
            <person name="Quail M.A."/>
            <person name="Rabbinowitsch E."/>
            <person name="Rutherford K.M."/>
            <person name="Rutter S."/>
            <person name="Saunders D."/>
            <person name="Seeger K."/>
            <person name="Sharp S."/>
            <person name="Skelton J."/>
            <person name="Simmonds M.N."/>
            <person name="Squares R."/>
            <person name="Squares S."/>
            <person name="Stevens K."/>
            <person name="Taylor K."/>
            <person name="Taylor R.G."/>
            <person name="Tivey A."/>
            <person name="Walsh S.V."/>
            <person name="Warren T."/>
            <person name="Whitehead S."/>
            <person name="Woodward J.R."/>
            <person name="Volckaert G."/>
            <person name="Aert R."/>
            <person name="Robben J."/>
            <person name="Grymonprez B."/>
            <person name="Weltjens I."/>
            <person name="Vanstreels E."/>
            <person name="Rieger M."/>
            <person name="Schaefer M."/>
            <person name="Mueller-Auer S."/>
            <person name="Gabel C."/>
            <person name="Fuchs M."/>
            <person name="Duesterhoeft A."/>
            <person name="Fritzc C."/>
            <person name="Holzer E."/>
            <person name="Moestl D."/>
            <person name="Hilbert H."/>
            <person name="Borzym K."/>
            <person name="Langer I."/>
            <person name="Beck A."/>
            <person name="Lehrach H."/>
            <person name="Reinhardt R."/>
            <person name="Pohl T.M."/>
            <person name="Eger P."/>
            <person name="Zimmermann W."/>
            <person name="Wedler H."/>
            <person name="Wambutt R."/>
            <person name="Purnelle B."/>
            <person name="Goffeau A."/>
            <person name="Cadieu E."/>
            <person name="Dreano S."/>
            <person name="Gloux S."/>
            <person name="Lelaure V."/>
            <person name="Mottier S."/>
            <person name="Galibert F."/>
            <person name="Aves S.J."/>
            <person name="Xiang Z."/>
            <person name="Hunt C."/>
            <person name="Moore K."/>
            <person name="Hurst S.M."/>
            <person name="Lucas M."/>
            <person name="Rochet M."/>
            <person name="Gaillardin C."/>
            <person name="Tallada V.A."/>
            <person name="Garzon A."/>
            <person name="Thode G."/>
            <person name="Daga R.R."/>
            <person name="Cruzado L."/>
            <person name="Jimenez J."/>
            <person name="Sanchez M."/>
            <person name="del Rey F."/>
            <person name="Benito J."/>
            <person name="Dominguez A."/>
            <person name="Revuelta J.L."/>
            <person name="Moreno S."/>
            <person name="Armstrong J."/>
            <person name="Forsburg S.L."/>
            <person name="Cerutti L."/>
            <person name="Lowe T."/>
            <person name="McCombie W.R."/>
            <person name="Paulsen I."/>
            <person name="Potashkin J."/>
            <person name="Shpakovski G.V."/>
            <person name="Ussery D."/>
            <person name="Barrell B.G."/>
            <person name="Nurse P."/>
        </authorList>
    </citation>
    <scope>NUCLEOTIDE SEQUENCE [LARGE SCALE GENOMIC DNA]</scope>
    <source>
        <strain>972 / ATCC 24843</strain>
    </source>
</reference>